<name>YCIB_BRUA1</name>
<comment type="function">
    <text evidence="1">Plays a role in cell envelope biogenesis, maintenance of cell envelope integrity and membrane homeostasis.</text>
</comment>
<comment type="subcellular location">
    <subcellularLocation>
        <location evidence="1">Cell inner membrane</location>
        <topology evidence="1">Multi-pass membrane protein</topology>
    </subcellularLocation>
</comment>
<comment type="similarity">
    <text evidence="1">Belongs to the YciB family.</text>
</comment>
<feature type="chain" id="PRO_1000098870" description="Inner membrane-spanning protein YciB">
    <location>
        <begin position="1"/>
        <end position="220"/>
    </location>
</feature>
<feature type="transmembrane region" description="Helical" evidence="1">
    <location>
        <begin position="20"/>
        <end position="40"/>
    </location>
</feature>
<feature type="transmembrane region" description="Helical" evidence="1">
    <location>
        <begin position="57"/>
        <end position="77"/>
    </location>
</feature>
<feature type="transmembrane region" description="Helical" evidence="1">
    <location>
        <begin position="86"/>
        <end position="106"/>
    </location>
</feature>
<feature type="transmembrane region" description="Helical" evidence="1">
    <location>
        <begin position="123"/>
        <end position="143"/>
    </location>
</feature>
<feature type="transmembrane region" description="Helical" evidence="1">
    <location>
        <begin position="156"/>
        <end position="176"/>
    </location>
</feature>
<feature type="transmembrane region" description="Helical" evidence="1">
    <location>
        <begin position="187"/>
        <end position="207"/>
    </location>
</feature>
<evidence type="ECO:0000255" key="1">
    <source>
        <dbReference type="HAMAP-Rule" id="MF_00189"/>
    </source>
</evidence>
<gene>
    <name evidence="1" type="primary">yciB</name>
    <name type="ordered locus">BAbS19_I18150</name>
</gene>
<dbReference type="EMBL" id="CP000887">
    <property type="protein sequence ID" value="ACD73297.1"/>
    <property type="molecule type" value="Genomic_DNA"/>
</dbReference>
<dbReference type="RefSeq" id="WP_002965003.1">
    <property type="nucleotide sequence ID" value="NC_010742.1"/>
</dbReference>
<dbReference type="SMR" id="B2S888"/>
<dbReference type="KEGG" id="bmc:BAbS19_I18150"/>
<dbReference type="HOGENOM" id="CLU_089554_1_1_5"/>
<dbReference type="Proteomes" id="UP000002565">
    <property type="component" value="Chromosome 1"/>
</dbReference>
<dbReference type="GO" id="GO:0005886">
    <property type="term" value="C:plasma membrane"/>
    <property type="evidence" value="ECO:0007669"/>
    <property type="project" value="UniProtKB-SubCell"/>
</dbReference>
<dbReference type="HAMAP" id="MF_00189">
    <property type="entry name" value="YciB"/>
    <property type="match status" value="1"/>
</dbReference>
<dbReference type="InterPro" id="IPR006008">
    <property type="entry name" value="YciB"/>
</dbReference>
<dbReference type="NCBIfam" id="TIGR00997">
    <property type="entry name" value="ispZ"/>
    <property type="match status" value="1"/>
</dbReference>
<dbReference type="NCBIfam" id="NF001323">
    <property type="entry name" value="PRK00259.1-1"/>
    <property type="match status" value="1"/>
</dbReference>
<dbReference type="PANTHER" id="PTHR36917:SF1">
    <property type="entry name" value="INNER MEMBRANE-SPANNING PROTEIN YCIB"/>
    <property type="match status" value="1"/>
</dbReference>
<dbReference type="PANTHER" id="PTHR36917">
    <property type="entry name" value="INTRACELLULAR SEPTATION PROTEIN A-RELATED"/>
    <property type="match status" value="1"/>
</dbReference>
<dbReference type="Pfam" id="PF04279">
    <property type="entry name" value="IspA"/>
    <property type="match status" value="1"/>
</dbReference>
<accession>B2S888</accession>
<keyword id="KW-0997">Cell inner membrane</keyword>
<keyword id="KW-1003">Cell membrane</keyword>
<keyword id="KW-0472">Membrane</keyword>
<keyword id="KW-0812">Transmembrane</keyword>
<keyword id="KW-1133">Transmembrane helix</keyword>
<proteinExistence type="inferred from homology"/>
<organism>
    <name type="scientific">Brucella abortus (strain S19)</name>
    <dbReference type="NCBI Taxonomy" id="430066"/>
    <lineage>
        <taxon>Bacteria</taxon>
        <taxon>Pseudomonadati</taxon>
        <taxon>Pseudomonadota</taxon>
        <taxon>Alphaproteobacteria</taxon>
        <taxon>Hyphomicrobiales</taxon>
        <taxon>Brucellaceae</taxon>
        <taxon>Brucella/Ochrobactrum group</taxon>
        <taxon>Brucella</taxon>
    </lineage>
</organism>
<sequence length="220" mass="24794">MEHPVFERDPSEKSETERREVPPLLKLALELGPLLVFFFANARGEMLIERFPILGSIGAPIFLATALFMAATVIALAISWSMTRTLPIMPLVSGIVVLVFGALTLWLHNDTFIKMKPTIVNTLFGGILLGGLFFGKSLLGYVFDSAFRLDAEGWRKLTLRWGLFFIFLAIVNEIVWRNFSTDTWVSFKVWGIMPITIVFTLLQMPLIQKHSLTDEENTAS</sequence>
<reference key="1">
    <citation type="journal article" date="2008" name="PLoS ONE">
        <title>Genome sequence of Brucella abortus vaccine strain S19 compared to virulent strains yields candidate virulence genes.</title>
        <authorList>
            <person name="Crasta O.R."/>
            <person name="Folkerts O."/>
            <person name="Fei Z."/>
            <person name="Mane S.P."/>
            <person name="Evans C."/>
            <person name="Martino-Catt S."/>
            <person name="Bricker B."/>
            <person name="Yu G."/>
            <person name="Du L."/>
            <person name="Sobral B.W."/>
        </authorList>
    </citation>
    <scope>NUCLEOTIDE SEQUENCE [LARGE SCALE GENOMIC DNA]</scope>
    <source>
        <strain>S19</strain>
    </source>
</reference>
<protein>
    <recommendedName>
        <fullName evidence="1">Inner membrane-spanning protein YciB</fullName>
    </recommendedName>
</protein>